<organism>
    <name type="scientific">Bacillus phage SP01</name>
    <name type="common">Bacteriophage SP01</name>
    <dbReference type="NCBI Taxonomy" id="2884427"/>
    <lineage>
        <taxon>Viruses</taxon>
        <taxon>Duplodnaviria</taxon>
        <taxon>Heunggongvirae</taxon>
        <taxon>Uroviricota</taxon>
        <taxon>Caudoviricetes</taxon>
        <taxon>Herelleviridae</taxon>
        <taxon>Spounavirinae</taxon>
        <taxon>Okubovirus</taxon>
        <taxon>Okubovirus SPO1</taxon>
    </lineage>
</organism>
<sequence length="40" mass="4866">MFKLLTLFKRNKITSAEEYYTQAIHICEQFDRSTQKYTSM</sequence>
<reference key="1">
    <citation type="journal article" date="1998" name="Virology">
        <title>Genes and regulatory sites of the 'host-takeover module' in the terminal redundancy of Bacillus subtilis bacteriophage SPO1.</title>
        <authorList>
            <person name="Stewart C.R."/>
            <person name="Gaslightwala I."/>
            <person name="Hinata K."/>
            <person name="Krolikowski K.A."/>
            <person name="Needleman D.S."/>
            <person name="Peng A.S.-Y."/>
            <person name="Peterman M.A."/>
            <person name="Tobias A."/>
            <person name="Wei P."/>
        </authorList>
    </citation>
    <scope>NUCLEOTIDE SEQUENCE [GENOMIC DNA]</scope>
</reference>
<protein>
    <recommendedName>
        <fullName>Putative gene 55 protein</fullName>
    </recommendedName>
</protein>
<organismHost>
    <name type="scientific">Bacillus subtilis</name>
    <dbReference type="NCBI Taxonomy" id="1423"/>
</organismHost>
<dbReference type="EMBL" id="AF031901">
    <property type="protein sequence ID" value="AAC29024.1"/>
    <property type="molecule type" value="Genomic_DNA"/>
</dbReference>
<dbReference type="RefSeq" id="YP_002300301.1">
    <property type="nucleotide sequence ID" value="NC_011421.1"/>
</dbReference>
<dbReference type="SMR" id="O48409"/>
<dbReference type="GeneID" id="7009014"/>
<dbReference type="KEGG" id="vg:7009014"/>
<name>GP55_BPSP1</name>
<accession>O48409</accession>
<gene>
    <name type="primary">55</name>
</gene>
<proteinExistence type="predicted"/>
<feature type="chain" id="PRO_0000106161" description="Putative gene 55 protein">
    <location>
        <begin position="1"/>
        <end position="40"/>
    </location>
</feature>